<reference key="1">
    <citation type="journal article" date="2002" name="Nature">
        <title>Complete genome sequence of the model actinomycete Streptomyces coelicolor A3(2).</title>
        <authorList>
            <person name="Bentley S.D."/>
            <person name="Chater K.F."/>
            <person name="Cerdeno-Tarraga A.-M."/>
            <person name="Challis G.L."/>
            <person name="Thomson N.R."/>
            <person name="James K.D."/>
            <person name="Harris D.E."/>
            <person name="Quail M.A."/>
            <person name="Kieser H."/>
            <person name="Harper D."/>
            <person name="Bateman A."/>
            <person name="Brown S."/>
            <person name="Chandra G."/>
            <person name="Chen C.W."/>
            <person name="Collins M."/>
            <person name="Cronin A."/>
            <person name="Fraser A."/>
            <person name="Goble A."/>
            <person name="Hidalgo J."/>
            <person name="Hornsby T."/>
            <person name="Howarth S."/>
            <person name="Huang C.-H."/>
            <person name="Kieser T."/>
            <person name="Larke L."/>
            <person name="Murphy L.D."/>
            <person name="Oliver K."/>
            <person name="O'Neil S."/>
            <person name="Rabbinowitsch E."/>
            <person name="Rajandream M.A."/>
            <person name="Rutherford K.M."/>
            <person name="Rutter S."/>
            <person name="Seeger K."/>
            <person name="Saunders D."/>
            <person name="Sharp S."/>
            <person name="Squares R."/>
            <person name="Squares S."/>
            <person name="Taylor K."/>
            <person name="Warren T."/>
            <person name="Wietzorrek A."/>
            <person name="Woodward J.R."/>
            <person name="Barrell B.G."/>
            <person name="Parkhill J."/>
            <person name="Hopwood D.A."/>
        </authorList>
    </citation>
    <scope>NUCLEOTIDE SEQUENCE [LARGE SCALE GENOMIC DNA]</scope>
    <source>
        <strain>ATCC BAA-471 / A3(2) / M145</strain>
    </source>
</reference>
<proteinExistence type="inferred from homology"/>
<feature type="chain" id="PRO_0000148846" description="Aspartyl/glutamyl-tRNA(Asn/Gln) amidotransferase subunit B">
    <location>
        <begin position="1"/>
        <end position="504"/>
    </location>
</feature>
<keyword id="KW-0067">ATP-binding</keyword>
<keyword id="KW-0436">Ligase</keyword>
<keyword id="KW-0547">Nucleotide-binding</keyword>
<keyword id="KW-0648">Protein biosynthesis</keyword>
<keyword id="KW-1185">Reference proteome</keyword>
<dbReference type="EC" id="6.3.5.-"/>
<dbReference type="EMBL" id="AL939124">
    <property type="protein sequence ID" value="CAB37577.1"/>
    <property type="molecule type" value="Genomic_DNA"/>
</dbReference>
<dbReference type="PIR" id="T35817">
    <property type="entry name" value="T35817"/>
</dbReference>
<dbReference type="RefSeq" id="NP_629636.1">
    <property type="nucleotide sequence ID" value="NC_003888.3"/>
</dbReference>
<dbReference type="RefSeq" id="WP_011030281.1">
    <property type="nucleotide sequence ID" value="NZ_VNID01000011.1"/>
</dbReference>
<dbReference type="SMR" id="Q9Z578"/>
<dbReference type="FunCoup" id="Q9Z578">
    <property type="interactions" value="438"/>
</dbReference>
<dbReference type="STRING" id="100226.gene:17763153"/>
<dbReference type="PaxDb" id="100226-SCO5501"/>
<dbReference type="KEGG" id="sco:SCO5501"/>
<dbReference type="PATRIC" id="fig|100226.15.peg.5585"/>
<dbReference type="eggNOG" id="COG0064">
    <property type="taxonomic scope" value="Bacteria"/>
</dbReference>
<dbReference type="HOGENOM" id="CLU_019240_0_0_11"/>
<dbReference type="InParanoid" id="Q9Z578"/>
<dbReference type="OrthoDB" id="9804078at2"/>
<dbReference type="PhylomeDB" id="Q9Z578"/>
<dbReference type="Proteomes" id="UP000001973">
    <property type="component" value="Chromosome"/>
</dbReference>
<dbReference type="GO" id="GO:0050566">
    <property type="term" value="F:asparaginyl-tRNA synthase (glutamine-hydrolyzing) activity"/>
    <property type="evidence" value="ECO:0007669"/>
    <property type="project" value="RHEA"/>
</dbReference>
<dbReference type="GO" id="GO:0005524">
    <property type="term" value="F:ATP binding"/>
    <property type="evidence" value="ECO:0007669"/>
    <property type="project" value="UniProtKB-KW"/>
</dbReference>
<dbReference type="GO" id="GO:0050567">
    <property type="term" value="F:glutaminyl-tRNA synthase (glutamine-hydrolyzing) activity"/>
    <property type="evidence" value="ECO:0000318"/>
    <property type="project" value="GO_Central"/>
</dbReference>
<dbReference type="GO" id="GO:0070681">
    <property type="term" value="P:glutaminyl-tRNAGln biosynthesis via transamidation"/>
    <property type="evidence" value="ECO:0000318"/>
    <property type="project" value="GO_Central"/>
</dbReference>
<dbReference type="GO" id="GO:0006412">
    <property type="term" value="P:translation"/>
    <property type="evidence" value="ECO:0007669"/>
    <property type="project" value="UniProtKB-UniRule"/>
</dbReference>
<dbReference type="FunFam" id="1.10.10.410:FF:000002">
    <property type="entry name" value="Aspartyl/glutamyl-tRNA(Asn/Gln) amidotransferase subunit B"/>
    <property type="match status" value="1"/>
</dbReference>
<dbReference type="Gene3D" id="1.10.10.410">
    <property type="match status" value="1"/>
</dbReference>
<dbReference type="HAMAP" id="MF_00121">
    <property type="entry name" value="GatB"/>
    <property type="match status" value="1"/>
</dbReference>
<dbReference type="InterPro" id="IPR017959">
    <property type="entry name" value="Asn/Gln-tRNA_amidoTrfase_suB/E"/>
</dbReference>
<dbReference type="InterPro" id="IPR006075">
    <property type="entry name" value="Asn/Gln-tRNA_Trfase_suB/E_cat"/>
</dbReference>
<dbReference type="InterPro" id="IPR018027">
    <property type="entry name" value="Asn/Gln_amidotransferase"/>
</dbReference>
<dbReference type="InterPro" id="IPR003789">
    <property type="entry name" value="Asn/Gln_tRNA_amidoTrase-B-like"/>
</dbReference>
<dbReference type="InterPro" id="IPR004413">
    <property type="entry name" value="GatB"/>
</dbReference>
<dbReference type="InterPro" id="IPR023168">
    <property type="entry name" value="GatB_Yqey_C_2"/>
</dbReference>
<dbReference type="InterPro" id="IPR017958">
    <property type="entry name" value="Gln-tRNA_amidoTrfase_suB_CS"/>
</dbReference>
<dbReference type="InterPro" id="IPR014746">
    <property type="entry name" value="Gln_synth/guanido_kin_cat_dom"/>
</dbReference>
<dbReference type="NCBIfam" id="TIGR00133">
    <property type="entry name" value="gatB"/>
    <property type="match status" value="1"/>
</dbReference>
<dbReference type="NCBIfam" id="NF004012">
    <property type="entry name" value="PRK05477.1-2"/>
    <property type="match status" value="1"/>
</dbReference>
<dbReference type="NCBIfam" id="NF004013">
    <property type="entry name" value="PRK05477.1-3"/>
    <property type="match status" value="1"/>
</dbReference>
<dbReference type="NCBIfam" id="NF004014">
    <property type="entry name" value="PRK05477.1-4"/>
    <property type="match status" value="1"/>
</dbReference>
<dbReference type="PANTHER" id="PTHR11659">
    <property type="entry name" value="GLUTAMYL-TRNA GLN AMIDOTRANSFERASE SUBUNIT B MITOCHONDRIAL AND PROKARYOTIC PET112-RELATED"/>
    <property type="match status" value="1"/>
</dbReference>
<dbReference type="PANTHER" id="PTHR11659:SF0">
    <property type="entry name" value="GLUTAMYL-TRNA(GLN) AMIDOTRANSFERASE SUBUNIT B, MITOCHONDRIAL"/>
    <property type="match status" value="1"/>
</dbReference>
<dbReference type="Pfam" id="PF02934">
    <property type="entry name" value="GatB_N"/>
    <property type="match status" value="1"/>
</dbReference>
<dbReference type="Pfam" id="PF02637">
    <property type="entry name" value="GatB_Yqey"/>
    <property type="match status" value="1"/>
</dbReference>
<dbReference type="SMART" id="SM00845">
    <property type="entry name" value="GatB_Yqey"/>
    <property type="match status" value="1"/>
</dbReference>
<dbReference type="SUPFAM" id="SSF89095">
    <property type="entry name" value="GatB/YqeY motif"/>
    <property type="match status" value="1"/>
</dbReference>
<dbReference type="SUPFAM" id="SSF55931">
    <property type="entry name" value="Glutamine synthetase/guanido kinase"/>
    <property type="match status" value="1"/>
</dbReference>
<dbReference type="PROSITE" id="PS01234">
    <property type="entry name" value="GATB"/>
    <property type="match status" value="1"/>
</dbReference>
<name>GATB_STRCO</name>
<organism>
    <name type="scientific">Streptomyces coelicolor (strain ATCC BAA-471 / A3(2) / M145)</name>
    <dbReference type="NCBI Taxonomy" id="100226"/>
    <lineage>
        <taxon>Bacteria</taxon>
        <taxon>Bacillati</taxon>
        <taxon>Actinomycetota</taxon>
        <taxon>Actinomycetes</taxon>
        <taxon>Kitasatosporales</taxon>
        <taxon>Streptomycetaceae</taxon>
        <taxon>Streptomyces</taxon>
        <taxon>Streptomyces albidoflavus group</taxon>
    </lineage>
</organism>
<gene>
    <name type="primary">gatB</name>
    <name type="ordered locus">SCO5501</name>
    <name type="ORF">SC8D9.13</name>
</gene>
<evidence type="ECO:0000250" key="1"/>
<evidence type="ECO:0000305" key="2"/>
<accession>Q9Z578</accession>
<sequence>MTTTTDLVSYEDALASYDPVMGLEVHVELGTKTKMFCGCSTALGADPNTQTCPVCLGMPGALPAVNATGVESAIKIGLALNCEIAEWCRFARKNYFYPDMPKNFQTSQYDEPIAFDGYLDVQLEDGETFRVQIERAHMEEDTGKSLHVGGATGRIHGASHSLLDYNRAGIPLIEIVTKPIEGAGERAPEVARAYVRELRELIRALGVSEARMEMGQMRCDVNLSLRPHGREKFGTRSETKNVNSLRSVERAARFEIQRHAAVLNDGGTIIQETRHFHEDTGSTTSGRVKEEAEDYRYFPEPDLVPVAPSRQWVEEIRSGLPELPLVRRNRLREEWGISGNDMQSILNAGALDPIVATIDAGADAASARKWWMGELARSANESGKALDELAITPVQVARVAELVTKGELNDKLARQVILGVLAGEGTPDEVVDKRGLKVVSDEGALTTAVDEAIAGNPGVADKIRGGKVAAAGALVGAVMKATRGQADAARVKELILEKLGVAEG</sequence>
<protein>
    <recommendedName>
        <fullName>Aspartyl/glutamyl-tRNA(Asn/Gln) amidotransferase subunit B</fullName>
        <shortName>Asp/Glu-ADT subunit B</shortName>
        <ecNumber>6.3.5.-</ecNumber>
    </recommendedName>
</protein>
<comment type="function">
    <text evidence="1">Allows the formation of correctly charged Asn-tRNA(Asn) or Gln-tRNA(Gln) through the transamidation of misacylated Asp-tRNA(Asn) or Glu-tRNA(Gln) in organisms which lack either or both of asparaginyl-tRNA or glutaminyl-tRNA synthetases. The reaction takes place in the presence of glutamine and ATP through an activated phospho-Asp-tRNA(Asn) or phospho-Glu-tRNA(Gln) (By similarity).</text>
</comment>
<comment type="catalytic activity">
    <reaction>
        <text>L-glutamyl-tRNA(Gln) + L-glutamine + ATP + H2O = L-glutaminyl-tRNA(Gln) + L-glutamate + ADP + phosphate + H(+)</text>
        <dbReference type="Rhea" id="RHEA:17521"/>
        <dbReference type="Rhea" id="RHEA-COMP:9681"/>
        <dbReference type="Rhea" id="RHEA-COMP:9684"/>
        <dbReference type="ChEBI" id="CHEBI:15377"/>
        <dbReference type="ChEBI" id="CHEBI:15378"/>
        <dbReference type="ChEBI" id="CHEBI:29985"/>
        <dbReference type="ChEBI" id="CHEBI:30616"/>
        <dbReference type="ChEBI" id="CHEBI:43474"/>
        <dbReference type="ChEBI" id="CHEBI:58359"/>
        <dbReference type="ChEBI" id="CHEBI:78520"/>
        <dbReference type="ChEBI" id="CHEBI:78521"/>
        <dbReference type="ChEBI" id="CHEBI:456216"/>
    </reaction>
</comment>
<comment type="catalytic activity">
    <reaction>
        <text>L-aspartyl-tRNA(Asn) + L-glutamine + ATP + H2O = L-asparaginyl-tRNA(Asn) + L-glutamate + ADP + phosphate + 2 H(+)</text>
        <dbReference type="Rhea" id="RHEA:14513"/>
        <dbReference type="Rhea" id="RHEA-COMP:9674"/>
        <dbReference type="Rhea" id="RHEA-COMP:9677"/>
        <dbReference type="ChEBI" id="CHEBI:15377"/>
        <dbReference type="ChEBI" id="CHEBI:15378"/>
        <dbReference type="ChEBI" id="CHEBI:29985"/>
        <dbReference type="ChEBI" id="CHEBI:30616"/>
        <dbReference type="ChEBI" id="CHEBI:43474"/>
        <dbReference type="ChEBI" id="CHEBI:58359"/>
        <dbReference type="ChEBI" id="CHEBI:78515"/>
        <dbReference type="ChEBI" id="CHEBI:78516"/>
        <dbReference type="ChEBI" id="CHEBI:456216"/>
    </reaction>
</comment>
<comment type="subunit">
    <text evidence="1">Heterotrimer of A, B and C subunits.</text>
</comment>
<comment type="similarity">
    <text evidence="2">Belongs to the GatB/GatE family. GatB subfamily.</text>
</comment>